<organism>
    <name type="scientific">Brucella melitensis biotype 2 (strain ATCC 23457)</name>
    <dbReference type="NCBI Taxonomy" id="546272"/>
    <lineage>
        <taxon>Bacteria</taxon>
        <taxon>Pseudomonadati</taxon>
        <taxon>Pseudomonadota</taxon>
        <taxon>Alphaproteobacteria</taxon>
        <taxon>Hyphomicrobiales</taxon>
        <taxon>Brucellaceae</taxon>
        <taxon>Brucella/Ochrobactrum group</taxon>
        <taxon>Brucella</taxon>
    </lineage>
</organism>
<sequence>MARYVFITGGVVSSLGKGIAAAALAALLQARGYRVRIRKLDPYLNVDPGTMSPYQHGEVFVTDDGAETDLDLGHYERFTGRPANQQDNITTGRIYRNIIEKERRGDYLGATVQVIPHVTDEIKNFVLEGNEDYDFVLCEIGGTVGDIEAMPFLEAIRQLGNELPRGTAVYIHLTLMPYIPAAGELKTKPTQHSVKELRSIGIAPDILLVRADREIPESERRKLSLFCNVRESAVIQALDVATIYDVPIAYHKEGLDSEVLSAFGIDPAPKPRMDRWEEVSHRLHNPEGEVTIAVVGKYTGLKDAYKSLIEALHHGGLANKVKVNLDWIEAEVFESEDPAPYLEKVHGILVPGGFGERGAEGKILAAKFARERKVPYFGICFGMQMACIEAARNLVGIEDASSSEFGPTREPVVGLMTEWLKGNMLEKRAAAGDLGGTMRLGAYEAVLKPDSKIAQIYGSTDIHERHRHRYEVNIDYKDRLEAAGLNFAGMSPDGVLPETVEYADHPWFIGVQYHPELKSRPFEPHPLFASFIEAAIEQSRLV</sequence>
<dbReference type="EC" id="6.3.4.2" evidence="1"/>
<dbReference type="EMBL" id="CP001488">
    <property type="protein sequence ID" value="ACO00913.1"/>
    <property type="molecule type" value="Genomic_DNA"/>
</dbReference>
<dbReference type="RefSeq" id="WP_004685676.1">
    <property type="nucleotide sequence ID" value="NC_012441.1"/>
</dbReference>
<dbReference type="SMR" id="C0RJA5"/>
<dbReference type="KEGG" id="bmi:BMEA_A1179"/>
<dbReference type="HOGENOM" id="CLU_011675_5_0_5"/>
<dbReference type="UniPathway" id="UPA00159">
    <property type="reaction ID" value="UER00277"/>
</dbReference>
<dbReference type="Proteomes" id="UP000001748">
    <property type="component" value="Chromosome I"/>
</dbReference>
<dbReference type="GO" id="GO:0005829">
    <property type="term" value="C:cytosol"/>
    <property type="evidence" value="ECO:0007669"/>
    <property type="project" value="TreeGrafter"/>
</dbReference>
<dbReference type="GO" id="GO:0005524">
    <property type="term" value="F:ATP binding"/>
    <property type="evidence" value="ECO:0007669"/>
    <property type="project" value="UniProtKB-KW"/>
</dbReference>
<dbReference type="GO" id="GO:0003883">
    <property type="term" value="F:CTP synthase activity"/>
    <property type="evidence" value="ECO:0007669"/>
    <property type="project" value="UniProtKB-UniRule"/>
</dbReference>
<dbReference type="GO" id="GO:0004359">
    <property type="term" value="F:glutaminase activity"/>
    <property type="evidence" value="ECO:0007669"/>
    <property type="project" value="RHEA"/>
</dbReference>
<dbReference type="GO" id="GO:0042802">
    <property type="term" value="F:identical protein binding"/>
    <property type="evidence" value="ECO:0007669"/>
    <property type="project" value="TreeGrafter"/>
</dbReference>
<dbReference type="GO" id="GO:0046872">
    <property type="term" value="F:metal ion binding"/>
    <property type="evidence" value="ECO:0007669"/>
    <property type="project" value="UniProtKB-KW"/>
</dbReference>
<dbReference type="GO" id="GO:0044210">
    <property type="term" value="P:'de novo' CTP biosynthetic process"/>
    <property type="evidence" value="ECO:0007669"/>
    <property type="project" value="UniProtKB-UniRule"/>
</dbReference>
<dbReference type="GO" id="GO:0019856">
    <property type="term" value="P:pyrimidine nucleobase biosynthetic process"/>
    <property type="evidence" value="ECO:0007669"/>
    <property type="project" value="TreeGrafter"/>
</dbReference>
<dbReference type="CDD" id="cd03113">
    <property type="entry name" value="CTPS_N"/>
    <property type="match status" value="1"/>
</dbReference>
<dbReference type="CDD" id="cd01746">
    <property type="entry name" value="GATase1_CTP_Synthase"/>
    <property type="match status" value="1"/>
</dbReference>
<dbReference type="FunFam" id="3.40.50.300:FF:000009">
    <property type="entry name" value="CTP synthase"/>
    <property type="match status" value="1"/>
</dbReference>
<dbReference type="FunFam" id="3.40.50.880:FF:000002">
    <property type="entry name" value="CTP synthase"/>
    <property type="match status" value="1"/>
</dbReference>
<dbReference type="Gene3D" id="3.40.50.880">
    <property type="match status" value="1"/>
</dbReference>
<dbReference type="Gene3D" id="3.40.50.300">
    <property type="entry name" value="P-loop containing nucleotide triphosphate hydrolases"/>
    <property type="match status" value="1"/>
</dbReference>
<dbReference type="HAMAP" id="MF_01227">
    <property type="entry name" value="PyrG"/>
    <property type="match status" value="1"/>
</dbReference>
<dbReference type="InterPro" id="IPR029062">
    <property type="entry name" value="Class_I_gatase-like"/>
</dbReference>
<dbReference type="InterPro" id="IPR004468">
    <property type="entry name" value="CTP_synthase"/>
</dbReference>
<dbReference type="InterPro" id="IPR017456">
    <property type="entry name" value="CTP_synthase_N"/>
</dbReference>
<dbReference type="InterPro" id="IPR017926">
    <property type="entry name" value="GATASE"/>
</dbReference>
<dbReference type="InterPro" id="IPR033828">
    <property type="entry name" value="GATase1_CTP_Synthase"/>
</dbReference>
<dbReference type="InterPro" id="IPR027417">
    <property type="entry name" value="P-loop_NTPase"/>
</dbReference>
<dbReference type="NCBIfam" id="NF003792">
    <property type="entry name" value="PRK05380.1"/>
    <property type="match status" value="1"/>
</dbReference>
<dbReference type="NCBIfam" id="TIGR00337">
    <property type="entry name" value="PyrG"/>
    <property type="match status" value="1"/>
</dbReference>
<dbReference type="PANTHER" id="PTHR11550">
    <property type="entry name" value="CTP SYNTHASE"/>
    <property type="match status" value="1"/>
</dbReference>
<dbReference type="PANTHER" id="PTHR11550:SF0">
    <property type="entry name" value="CTP SYNTHASE-RELATED"/>
    <property type="match status" value="1"/>
</dbReference>
<dbReference type="Pfam" id="PF06418">
    <property type="entry name" value="CTP_synth_N"/>
    <property type="match status" value="1"/>
</dbReference>
<dbReference type="Pfam" id="PF00117">
    <property type="entry name" value="GATase"/>
    <property type="match status" value="1"/>
</dbReference>
<dbReference type="SUPFAM" id="SSF52317">
    <property type="entry name" value="Class I glutamine amidotransferase-like"/>
    <property type="match status" value="1"/>
</dbReference>
<dbReference type="SUPFAM" id="SSF52540">
    <property type="entry name" value="P-loop containing nucleoside triphosphate hydrolases"/>
    <property type="match status" value="1"/>
</dbReference>
<dbReference type="PROSITE" id="PS51273">
    <property type="entry name" value="GATASE_TYPE_1"/>
    <property type="match status" value="1"/>
</dbReference>
<accession>C0RJA5</accession>
<name>PYRG_BRUMB</name>
<keyword id="KW-0067">ATP-binding</keyword>
<keyword id="KW-0315">Glutamine amidotransferase</keyword>
<keyword id="KW-0436">Ligase</keyword>
<keyword id="KW-0460">Magnesium</keyword>
<keyword id="KW-0479">Metal-binding</keyword>
<keyword id="KW-0547">Nucleotide-binding</keyword>
<keyword id="KW-0665">Pyrimidine biosynthesis</keyword>
<gene>
    <name evidence="1" type="primary">pyrG</name>
    <name type="ordered locus">BMEA_A1179</name>
</gene>
<protein>
    <recommendedName>
        <fullName evidence="1">CTP synthase</fullName>
        <ecNumber evidence="1">6.3.4.2</ecNumber>
    </recommendedName>
    <alternativeName>
        <fullName evidence="1">Cytidine 5'-triphosphate synthase</fullName>
    </alternativeName>
    <alternativeName>
        <fullName evidence="1">Cytidine triphosphate synthetase</fullName>
        <shortName evidence="1">CTP synthetase</shortName>
        <shortName evidence="1">CTPS</shortName>
    </alternativeName>
    <alternativeName>
        <fullName evidence="1">UTP--ammonia ligase</fullName>
    </alternativeName>
</protein>
<evidence type="ECO:0000255" key="1">
    <source>
        <dbReference type="HAMAP-Rule" id="MF_01227"/>
    </source>
</evidence>
<comment type="function">
    <text evidence="1">Catalyzes the ATP-dependent amination of UTP to CTP with either L-glutamine or ammonia as the source of nitrogen. Regulates intracellular CTP levels through interactions with the four ribonucleotide triphosphates.</text>
</comment>
<comment type="catalytic activity">
    <reaction evidence="1">
        <text>UTP + L-glutamine + ATP + H2O = CTP + L-glutamate + ADP + phosphate + 2 H(+)</text>
        <dbReference type="Rhea" id="RHEA:26426"/>
        <dbReference type="ChEBI" id="CHEBI:15377"/>
        <dbReference type="ChEBI" id="CHEBI:15378"/>
        <dbReference type="ChEBI" id="CHEBI:29985"/>
        <dbReference type="ChEBI" id="CHEBI:30616"/>
        <dbReference type="ChEBI" id="CHEBI:37563"/>
        <dbReference type="ChEBI" id="CHEBI:43474"/>
        <dbReference type="ChEBI" id="CHEBI:46398"/>
        <dbReference type="ChEBI" id="CHEBI:58359"/>
        <dbReference type="ChEBI" id="CHEBI:456216"/>
        <dbReference type="EC" id="6.3.4.2"/>
    </reaction>
</comment>
<comment type="catalytic activity">
    <reaction evidence="1">
        <text>L-glutamine + H2O = L-glutamate + NH4(+)</text>
        <dbReference type="Rhea" id="RHEA:15889"/>
        <dbReference type="ChEBI" id="CHEBI:15377"/>
        <dbReference type="ChEBI" id="CHEBI:28938"/>
        <dbReference type="ChEBI" id="CHEBI:29985"/>
        <dbReference type="ChEBI" id="CHEBI:58359"/>
    </reaction>
</comment>
<comment type="catalytic activity">
    <reaction evidence="1">
        <text>UTP + NH4(+) + ATP = CTP + ADP + phosphate + 2 H(+)</text>
        <dbReference type="Rhea" id="RHEA:16597"/>
        <dbReference type="ChEBI" id="CHEBI:15378"/>
        <dbReference type="ChEBI" id="CHEBI:28938"/>
        <dbReference type="ChEBI" id="CHEBI:30616"/>
        <dbReference type="ChEBI" id="CHEBI:37563"/>
        <dbReference type="ChEBI" id="CHEBI:43474"/>
        <dbReference type="ChEBI" id="CHEBI:46398"/>
        <dbReference type="ChEBI" id="CHEBI:456216"/>
    </reaction>
</comment>
<comment type="activity regulation">
    <text evidence="1">Allosterically activated by GTP, when glutamine is the substrate; GTP has no effect on the reaction when ammonia is the substrate. The allosteric effector GTP functions by stabilizing the protein conformation that binds the tetrahedral intermediate(s) formed during glutamine hydrolysis. Inhibited by the product CTP, via allosteric rather than competitive inhibition.</text>
</comment>
<comment type="pathway">
    <text evidence="1">Pyrimidine metabolism; CTP biosynthesis via de novo pathway; CTP from UDP: step 2/2.</text>
</comment>
<comment type="subunit">
    <text evidence="1">Homotetramer.</text>
</comment>
<comment type="miscellaneous">
    <text evidence="1">CTPSs have evolved a hybrid strategy for distinguishing between UTP and CTP. The overlapping regions of the product feedback inhibitory and substrate sites recognize a common feature in both compounds, the triphosphate moiety. To differentiate isosteric substrate and product pyrimidine rings, an additional pocket far from the expected kinase/ligase catalytic site, specifically recognizes the cytosine and ribose portions of the product inhibitor.</text>
</comment>
<comment type="similarity">
    <text evidence="1">Belongs to the CTP synthase family.</text>
</comment>
<reference key="1">
    <citation type="submission" date="2009-03" db="EMBL/GenBank/DDBJ databases">
        <title>Brucella melitensis ATCC 23457 whole genome shotgun sequencing project.</title>
        <authorList>
            <person name="Setubal J.C."/>
            <person name="Boyle S."/>
            <person name="Crasta O.R."/>
            <person name="Gillespie J.J."/>
            <person name="Kenyon R.W."/>
            <person name="Lu J."/>
            <person name="Mane S."/>
            <person name="Nagrani S."/>
            <person name="Shallom J.M."/>
            <person name="Shallom S."/>
            <person name="Shukla M."/>
            <person name="Snyder E.E."/>
            <person name="Sobral B.W."/>
            <person name="Wattam A.R."/>
            <person name="Will R."/>
            <person name="Williams K."/>
            <person name="Yoo H."/>
            <person name="Munk C."/>
            <person name="Tapia R."/>
            <person name="Han C."/>
            <person name="Detter J.C."/>
            <person name="Bruce D."/>
            <person name="Brettin T.S."/>
        </authorList>
    </citation>
    <scope>NUCLEOTIDE SEQUENCE [LARGE SCALE GENOMIC DNA]</scope>
    <source>
        <strain>ATCC 23457</strain>
    </source>
</reference>
<proteinExistence type="inferred from homology"/>
<feature type="chain" id="PRO_1000164930" description="CTP synthase">
    <location>
        <begin position="1"/>
        <end position="542"/>
    </location>
</feature>
<feature type="domain" description="Glutamine amidotransferase type-1" evidence="1">
    <location>
        <begin position="291"/>
        <end position="541"/>
    </location>
</feature>
<feature type="region of interest" description="Amidoligase domain" evidence="1">
    <location>
        <begin position="1"/>
        <end position="265"/>
    </location>
</feature>
<feature type="active site" description="Nucleophile; for glutamine hydrolysis" evidence="1">
    <location>
        <position position="380"/>
    </location>
</feature>
<feature type="active site" evidence="1">
    <location>
        <position position="514"/>
    </location>
</feature>
<feature type="active site" evidence="1">
    <location>
        <position position="516"/>
    </location>
</feature>
<feature type="binding site" evidence="1">
    <location>
        <position position="13"/>
    </location>
    <ligand>
        <name>CTP</name>
        <dbReference type="ChEBI" id="CHEBI:37563"/>
        <note>allosteric inhibitor</note>
    </ligand>
</feature>
<feature type="binding site" evidence="1">
    <location>
        <position position="13"/>
    </location>
    <ligand>
        <name>UTP</name>
        <dbReference type="ChEBI" id="CHEBI:46398"/>
    </ligand>
</feature>
<feature type="binding site" evidence="1">
    <location>
        <begin position="14"/>
        <end position="19"/>
    </location>
    <ligand>
        <name>ATP</name>
        <dbReference type="ChEBI" id="CHEBI:30616"/>
    </ligand>
</feature>
<feature type="binding site" evidence="1">
    <location>
        <position position="54"/>
    </location>
    <ligand>
        <name>L-glutamine</name>
        <dbReference type="ChEBI" id="CHEBI:58359"/>
    </ligand>
</feature>
<feature type="binding site" evidence="1">
    <location>
        <position position="71"/>
    </location>
    <ligand>
        <name>ATP</name>
        <dbReference type="ChEBI" id="CHEBI:30616"/>
    </ligand>
</feature>
<feature type="binding site" evidence="1">
    <location>
        <position position="71"/>
    </location>
    <ligand>
        <name>Mg(2+)</name>
        <dbReference type="ChEBI" id="CHEBI:18420"/>
    </ligand>
</feature>
<feature type="binding site" evidence="1">
    <location>
        <position position="139"/>
    </location>
    <ligand>
        <name>Mg(2+)</name>
        <dbReference type="ChEBI" id="CHEBI:18420"/>
    </ligand>
</feature>
<feature type="binding site" evidence="1">
    <location>
        <begin position="146"/>
        <end position="148"/>
    </location>
    <ligand>
        <name>CTP</name>
        <dbReference type="ChEBI" id="CHEBI:37563"/>
        <note>allosteric inhibitor</note>
    </ligand>
</feature>
<feature type="binding site" evidence="1">
    <location>
        <begin position="186"/>
        <end position="191"/>
    </location>
    <ligand>
        <name>CTP</name>
        <dbReference type="ChEBI" id="CHEBI:37563"/>
        <note>allosteric inhibitor</note>
    </ligand>
</feature>
<feature type="binding site" evidence="1">
    <location>
        <begin position="186"/>
        <end position="191"/>
    </location>
    <ligand>
        <name>UTP</name>
        <dbReference type="ChEBI" id="CHEBI:46398"/>
    </ligand>
</feature>
<feature type="binding site" evidence="1">
    <location>
        <position position="222"/>
    </location>
    <ligand>
        <name>CTP</name>
        <dbReference type="ChEBI" id="CHEBI:37563"/>
        <note>allosteric inhibitor</note>
    </ligand>
</feature>
<feature type="binding site" evidence="1">
    <location>
        <position position="222"/>
    </location>
    <ligand>
        <name>UTP</name>
        <dbReference type="ChEBI" id="CHEBI:46398"/>
    </ligand>
</feature>
<feature type="binding site" evidence="1">
    <location>
        <position position="353"/>
    </location>
    <ligand>
        <name>L-glutamine</name>
        <dbReference type="ChEBI" id="CHEBI:58359"/>
    </ligand>
</feature>
<feature type="binding site" evidence="1">
    <location>
        <begin position="381"/>
        <end position="384"/>
    </location>
    <ligand>
        <name>L-glutamine</name>
        <dbReference type="ChEBI" id="CHEBI:58359"/>
    </ligand>
</feature>
<feature type="binding site" evidence="1">
    <location>
        <position position="404"/>
    </location>
    <ligand>
        <name>L-glutamine</name>
        <dbReference type="ChEBI" id="CHEBI:58359"/>
    </ligand>
</feature>
<feature type="binding site" evidence="1">
    <location>
        <position position="469"/>
    </location>
    <ligand>
        <name>L-glutamine</name>
        <dbReference type="ChEBI" id="CHEBI:58359"/>
    </ligand>
</feature>